<keyword id="KW-0067">ATP-binding</keyword>
<keyword id="KW-0460">Magnesium</keyword>
<keyword id="KW-0547">Nucleotide-binding</keyword>
<keyword id="KW-1185">Reference proteome</keyword>
<keyword id="KW-0808">Transferase</keyword>
<keyword id="KW-0819">tRNA processing</keyword>
<protein>
    <recommendedName>
        <fullName evidence="1">tRNA dimethylallyltransferase</fullName>
        <ecNumber evidence="1">2.5.1.75</ecNumber>
    </recommendedName>
    <alternativeName>
        <fullName evidence="1">Dimethylallyl diphosphate:tRNA dimethylallyltransferase</fullName>
        <shortName evidence="1">DMAPP:tRNA dimethylallyltransferase</shortName>
        <shortName evidence="1">DMATase</shortName>
    </alternativeName>
    <alternativeName>
        <fullName evidence="1">Isopentenyl-diphosphate:tRNA isopentenyltransferase</fullName>
        <shortName evidence="1">IPP transferase</shortName>
        <shortName evidence="1">IPPT</shortName>
        <shortName evidence="1">IPTase</shortName>
    </alternativeName>
</protein>
<accession>P9WJW0</accession>
<accession>L0TAG4</accession>
<accession>O33232</accession>
<accession>P65352</accession>
<proteinExistence type="inferred from homology"/>
<organism>
    <name type="scientific">Mycobacterium tuberculosis (strain CDC 1551 / Oshkosh)</name>
    <dbReference type="NCBI Taxonomy" id="83331"/>
    <lineage>
        <taxon>Bacteria</taxon>
        <taxon>Bacillati</taxon>
        <taxon>Actinomycetota</taxon>
        <taxon>Actinomycetes</taxon>
        <taxon>Mycobacteriales</taxon>
        <taxon>Mycobacteriaceae</taxon>
        <taxon>Mycobacterium</taxon>
        <taxon>Mycobacterium tuberculosis complex</taxon>
    </lineage>
</organism>
<sequence>MRPLAIIGPTGAGKSQLALDVAARLGARVSVEIVNADAMQLYRGMDIGTAKLPVSERRGIPHHQLDVLDVTETATVARYQRAAAADIEAIAARGAVPVVVGGSMLYVQSLLDDWSFPATDPSVRARWERRLAEVGVDRLHAELARRDPAAAAAILPTDARRTVRALEVVELTGQPFAASAPRIGAPRWDTVIVGLDCQTTILDERLARRTDLMFDQGLVEEVRTLLRNGLREGVTASRALGYAQVIAALDAGAGADMMRAAREQTYLGTRRYVRRQRSWFRRDHRVHWLDAGVASSPDRARLVDDAVRLWRHVT</sequence>
<comment type="function">
    <text evidence="1">Catalyzes the transfer of a dimethylallyl group onto the adenine at position 37 in tRNAs that read codons beginning with uridine, leading to the formation of N6-(dimethylallyl)adenosine (i(6)A).</text>
</comment>
<comment type="catalytic activity">
    <reaction evidence="1">
        <text>adenosine(37) in tRNA + dimethylallyl diphosphate = N(6)-dimethylallyladenosine(37) in tRNA + diphosphate</text>
        <dbReference type="Rhea" id="RHEA:26482"/>
        <dbReference type="Rhea" id="RHEA-COMP:10162"/>
        <dbReference type="Rhea" id="RHEA-COMP:10375"/>
        <dbReference type="ChEBI" id="CHEBI:33019"/>
        <dbReference type="ChEBI" id="CHEBI:57623"/>
        <dbReference type="ChEBI" id="CHEBI:74411"/>
        <dbReference type="ChEBI" id="CHEBI:74415"/>
        <dbReference type="EC" id="2.5.1.75"/>
    </reaction>
</comment>
<comment type="cofactor">
    <cofactor evidence="1">
        <name>Mg(2+)</name>
        <dbReference type="ChEBI" id="CHEBI:18420"/>
    </cofactor>
</comment>
<comment type="subunit">
    <text evidence="1">Monomer.</text>
</comment>
<comment type="similarity">
    <text evidence="1">Belongs to the IPP transferase family.</text>
</comment>
<feature type="chain" id="PRO_0000427761" description="tRNA dimethylallyltransferase">
    <location>
        <begin position="1"/>
        <end position="314"/>
    </location>
</feature>
<feature type="binding site" evidence="1">
    <location>
        <begin position="8"/>
        <end position="15"/>
    </location>
    <ligand>
        <name>ATP</name>
        <dbReference type="ChEBI" id="CHEBI:30616"/>
    </ligand>
</feature>
<feature type="binding site" evidence="1">
    <location>
        <begin position="10"/>
        <end position="15"/>
    </location>
    <ligand>
        <name>substrate</name>
    </ligand>
</feature>
<feature type="site" description="Interaction with substrate tRNA" evidence="1">
    <location>
        <position position="103"/>
    </location>
</feature>
<feature type="site" description="Interaction with substrate tRNA" evidence="1">
    <location>
        <position position="124"/>
    </location>
</feature>
<name>MIAA_MYCTO</name>
<reference key="1">
    <citation type="journal article" date="2002" name="J. Bacteriol.">
        <title>Whole-genome comparison of Mycobacterium tuberculosis clinical and laboratory strains.</title>
        <authorList>
            <person name="Fleischmann R.D."/>
            <person name="Alland D."/>
            <person name="Eisen J.A."/>
            <person name="Carpenter L."/>
            <person name="White O."/>
            <person name="Peterson J.D."/>
            <person name="DeBoy R.T."/>
            <person name="Dodson R.J."/>
            <person name="Gwinn M.L."/>
            <person name="Haft D.H."/>
            <person name="Hickey E.K."/>
            <person name="Kolonay J.F."/>
            <person name="Nelson W.C."/>
            <person name="Umayam L.A."/>
            <person name="Ermolaeva M.D."/>
            <person name="Salzberg S.L."/>
            <person name="Delcher A."/>
            <person name="Utterback T.R."/>
            <person name="Weidman J.F."/>
            <person name="Khouri H.M."/>
            <person name="Gill J."/>
            <person name="Mikula A."/>
            <person name="Bishai W."/>
            <person name="Jacobs W.R. Jr."/>
            <person name="Venter J.C."/>
            <person name="Fraser C.M."/>
        </authorList>
    </citation>
    <scope>NUCLEOTIDE SEQUENCE [LARGE SCALE GENOMIC DNA]</scope>
    <source>
        <strain>CDC 1551 / Oshkosh</strain>
    </source>
</reference>
<dbReference type="EC" id="2.5.1.75" evidence="1"/>
<dbReference type="EMBL" id="AE000516">
    <property type="protein sequence ID" value="AAK47116.1"/>
    <property type="molecule type" value="Genomic_DNA"/>
</dbReference>
<dbReference type="PIR" id="F70505">
    <property type="entry name" value="F70505"/>
</dbReference>
<dbReference type="RefSeq" id="WP_003413989.1">
    <property type="nucleotide sequence ID" value="NZ_KK341227.1"/>
</dbReference>
<dbReference type="SMR" id="P9WJW0"/>
<dbReference type="GeneID" id="45426714"/>
<dbReference type="KEGG" id="mtc:MT2799"/>
<dbReference type="PATRIC" id="fig|83331.31.peg.3014"/>
<dbReference type="HOGENOM" id="CLU_032616_0_1_11"/>
<dbReference type="Proteomes" id="UP000001020">
    <property type="component" value="Chromosome"/>
</dbReference>
<dbReference type="GO" id="GO:0005524">
    <property type="term" value="F:ATP binding"/>
    <property type="evidence" value="ECO:0007669"/>
    <property type="project" value="UniProtKB-UniRule"/>
</dbReference>
<dbReference type="GO" id="GO:0052381">
    <property type="term" value="F:tRNA dimethylallyltransferase activity"/>
    <property type="evidence" value="ECO:0007669"/>
    <property type="project" value="UniProtKB-UniRule"/>
</dbReference>
<dbReference type="GO" id="GO:0006400">
    <property type="term" value="P:tRNA modification"/>
    <property type="evidence" value="ECO:0007669"/>
    <property type="project" value="TreeGrafter"/>
</dbReference>
<dbReference type="FunFam" id="1.10.20.140:FF:000001">
    <property type="entry name" value="tRNA dimethylallyltransferase"/>
    <property type="match status" value="1"/>
</dbReference>
<dbReference type="Gene3D" id="1.10.20.140">
    <property type="match status" value="1"/>
</dbReference>
<dbReference type="Gene3D" id="3.40.50.300">
    <property type="entry name" value="P-loop containing nucleotide triphosphate hydrolases"/>
    <property type="match status" value="1"/>
</dbReference>
<dbReference type="HAMAP" id="MF_00185">
    <property type="entry name" value="IPP_trans"/>
    <property type="match status" value="1"/>
</dbReference>
<dbReference type="InterPro" id="IPR039657">
    <property type="entry name" value="Dimethylallyltransferase"/>
</dbReference>
<dbReference type="InterPro" id="IPR018022">
    <property type="entry name" value="IPT"/>
</dbReference>
<dbReference type="InterPro" id="IPR027417">
    <property type="entry name" value="P-loop_NTPase"/>
</dbReference>
<dbReference type="NCBIfam" id="TIGR00174">
    <property type="entry name" value="miaA"/>
    <property type="match status" value="1"/>
</dbReference>
<dbReference type="PANTHER" id="PTHR11088">
    <property type="entry name" value="TRNA DIMETHYLALLYLTRANSFERASE"/>
    <property type="match status" value="1"/>
</dbReference>
<dbReference type="PANTHER" id="PTHR11088:SF60">
    <property type="entry name" value="TRNA DIMETHYLALLYLTRANSFERASE"/>
    <property type="match status" value="1"/>
</dbReference>
<dbReference type="Pfam" id="PF01715">
    <property type="entry name" value="IPPT"/>
    <property type="match status" value="1"/>
</dbReference>
<dbReference type="SUPFAM" id="SSF52540">
    <property type="entry name" value="P-loop containing nucleoside triphosphate hydrolases"/>
    <property type="match status" value="1"/>
</dbReference>
<evidence type="ECO:0000255" key="1">
    <source>
        <dbReference type="HAMAP-Rule" id="MF_00185"/>
    </source>
</evidence>
<gene>
    <name evidence="1" type="primary">miaA</name>
    <name type="ordered locus">MT2799</name>
</gene>